<proteinExistence type="inferred from homology"/>
<sequence length="204" mass="23206">MNIDIFLFYLFSIFALISSLMVIGLTNAVHSVLFLILVFCNVAGLLLLLGPEFFSFMLIIVYVGAIAVLFLFVVMMLNIKLKSTNISFSSLWPIGILTFVILLSQFFSSFYELDLVKFQGKELFFISWANENSNLTNIKVIGKVLYTHFNLLFLICGLILLVAMIGVIVLTMHQRVDVKKQQIALQLARTAPNVIKFIILRRKR</sequence>
<gene>
    <name type="primary">ND6</name>
    <name type="synonym">NAD6</name>
</gene>
<geneLocation type="mitochondrion"/>
<protein>
    <recommendedName>
        <fullName>NADH-ubiquinone oxidoreductase chain 6</fullName>
        <ecNumber>7.1.1.2</ecNumber>
    </recommendedName>
    <alternativeName>
        <fullName>NADH dehydrogenase subunit 6</fullName>
    </alternativeName>
</protein>
<accession>P48924</accession>
<organism>
    <name type="scientific">Chondrus crispus</name>
    <name type="common">Carrageen Irish moss</name>
    <name type="synonym">Polymorpha crispa</name>
    <dbReference type="NCBI Taxonomy" id="2769"/>
    <lineage>
        <taxon>Eukaryota</taxon>
        <taxon>Rhodophyta</taxon>
        <taxon>Florideophyceae</taxon>
        <taxon>Rhodymeniophycidae</taxon>
        <taxon>Gigartinales</taxon>
        <taxon>Gigartinaceae</taxon>
        <taxon>Chondrus</taxon>
    </lineage>
</organism>
<feature type="chain" id="PRO_0000118268" description="NADH-ubiquinone oxidoreductase chain 6">
    <location>
        <begin position="1"/>
        <end position="204"/>
    </location>
</feature>
<feature type="transmembrane region" description="Helical" evidence="2">
    <location>
        <begin position="5"/>
        <end position="25"/>
    </location>
</feature>
<feature type="transmembrane region" description="Helical" evidence="2">
    <location>
        <begin position="29"/>
        <end position="49"/>
    </location>
</feature>
<feature type="transmembrane region" description="Helical" evidence="2">
    <location>
        <begin position="56"/>
        <end position="76"/>
    </location>
</feature>
<feature type="transmembrane region" description="Helical" evidence="2">
    <location>
        <begin position="91"/>
        <end position="111"/>
    </location>
</feature>
<feature type="transmembrane region" description="Helical" evidence="2">
    <location>
        <begin position="151"/>
        <end position="171"/>
    </location>
</feature>
<name>NU6M_CHOCR</name>
<comment type="function">
    <text evidence="1">Core subunit of the mitochondrial membrane respiratory chain NADH dehydrogenase (Complex I) that is believed to belong to the minimal assembly required for catalysis. Complex I functions in the transfer of electrons from NADH to the respiratory chain. The immediate electron acceptor for the enzyme is believed to be ubiquinone (By similarity).</text>
</comment>
<comment type="catalytic activity">
    <reaction>
        <text>a ubiquinone + NADH + 5 H(+)(in) = a ubiquinol + NAD(+) + 4 H(+)(out)</text>
        <dbReference type="Rhea" id="RHEA:29091"/>
        <dbReference type="Rhea" id="RHEA-COMP:9565"/>
        <dbReference type="Rhea" id="RHEA-COMP:9566"/>
        <dbReference type="ChEBI" id="CHEBI:15378"/>
        <dbReference type="ChEBI" id="CHEBI:16389"/>
        <dbReference type="ChEBI" id="CHEBI:17976"/>
        <dbReference type="ChEBI" id="CHEBI:57540"/>
        <dbReference type="ChEBI" id="CHEBI:57945"/>
        <dbReference type="EC" id="7.1.1.2"/>
    </reaction>
</comment>
<comment type="subcellular location">
    <subcellularLocation>
        <location evidence="3">Mitochondrion membrane</location>
        <topology evidence="3">Multi-pass membrane protein</topology>
    </subcellularLocation>
</comment>
<comment type="similarity">
    <text evidence="3">Belongs to the complex I subunit 6 family.</text>
</comment>
<reference key="1">
    <citation type="journal article" date="1995" name="J. Mol. Biol.">
        <title>Complete sequence of the mitochondrial DNA of the rhodophyte Chondrus crispus (Gigartinales). Gene content and genome organization.</title>
        <authorList>
            <person name="Leblanc C."/>
            <person name="Boyen C."/>
            <person name="Richard O."/>
            <person name="Bonnard G."/>
            <person name="Grienenberger J.-M."/>
            <person name="Kloareg B."/>
        </authorList>
    </citation>
    <scope>NUCLEOTIDE SEQUENCE [GENOMIC DNA]</scope>
    <source>
        <tissue>Apices</tissue>
    </source>
</reference>
<keyword id="KW-0249">Electron transport</keyword>
<keyword id="KW-0472">Membrane</keyword>
<keyword id="KW-0496">Mitochondrion</keyword>
<keyword id="KW-0520">NAD</keyword>
<keyword id="KW-0679">Respiratory chain</keyword>
<keyword id="KW-1278">Translocase</keyword>
<keyword id="KW-0812">Transmembrane</keyword>
<keyword id="KW-1133">Transmembrane helix</keyword>
<keyword id="KW-0813">Transport</keyword>
<keyword id="KW-0830">Ubiquinone</keyword>
<evidence type="ECO:0000250" key="1"/>
<evidence type="ECO:0000255" key="2"/>
<evidence type="ECO:0000305" key="3"/>
<dbReference type="EC" id="7.1.1.2"/>
<dbReference type="EMBL" id="Z47547">
    <property type="protein sequence ID" value="CAA87610.1"/>
    <property type="molecule type" value="Genomic_DNA"/>
</dbReference>
<dbReference type="PIR" id="S59094">
    <property type="entry name" value="S59094"/>
</dbReference>
<dbReference type="RefSeq" id="NP_062487.1">
    <property type="nucleotide sequence ID" value="NC_001677.2"/>
</dbReference>
<dbReference type="SMR" id="P48924"/>
<dbReference type="GeneID" id="809405"/>
<dbReference type="KEGG" id="ccp:ChcroMp08"/>
<dbReference type="GO" id="GO:0031966">
    <property type="term" value="C:mitochondrial membrane"/>
    <property type="evidence" value="ECO:0007669"/>
    <property type="project" value="UniProtKB-SubCell"/>
</dbReference>
<dbReference type="GO" id="GO:0008137">
    <property type="term" value="F:NADH dehydrogenase (ubiquinone) activity"/>
    <property type="evidence" value="ECO:0007669"/>
    <property type="project" value="UniProtKB-EC"/>
</dbReference>
<dbReference type="Gene3D" id="1.20.120.1200">
    <property type="entry name" value="NADH-ubiquinone/plastoquinone oxidoreductase chain 6, subunit NuoJ"/>
    <property type="match status" value="1"/>
</dbReference>
<dbReference type="InterPro" id="IPR001457">
    <property type="entry name" value="NADH_UbQ/plastoQ_OxRdtase_su6"/>
</dbReference>
<dbReference type="InterPro" id="IPR042106">
    <property type="entry name" value="Nuo/plastoQ_OxRdtase_6_NuoJ"/>
</dbReference>
<dbReference type="NCBIfam" id="NF005164">
    <property type="entry name" value="PRK06638.1-4"/>
    <property type="match status" value="1"/>
</dbReference>
<dbReference type="PANTHER" id="PTHR33269">
    <property type="entry name" value="NADH-UBIQUINONE OXIDOREDUCTASE CHAIN 6"/>
    <property type="match status" value="1"/>
</dbReference>
<dbReference type="PANTHER" id="PTHR33269:SF17">
    <property type="entry name" value="NADH-UBIQUINONE OXIDOREDUCTASE CHAIN 6"/>
    <property type="match status" value="1"/>
</dbReference>
<dbReference type="Pfam" id="PF00499">
    <property type="entry name" value="Oxidored_q3"/>
    <property type="match status" value="1"/>
</dbReference>